<evidence type="ECO:0000255" key="1">
    <source>
        <dbReference type="HAMAP-Rule" id="MF_00435"/>
    </source>
</evidence>
<evidence type="ECO:0000255" key="2">
    <source>
        <dbReference type="PROSITE-ProRule" id="PRU01197"/>
    </source>
</evidence>
<evidence type="ECO:0000255" key="3">
    <source>
        <dbReference type="PROSITE-ProRule" id="PRU01198"/>
    </source>
</evidence>
<accession>Q6A7Z2</accession>
<organism>
    <name type="scientific">Cutibacterium acnes (strain DSM 16379 / KPA171202)</name>
    <name type="common">Propionibacterium acnes</name>
    <dbReference type="NCBI Taxonomy" id="267747"/>
    <lineage>
        <taxon>Bacteria</taxon>
        <taxon>Bacillati</taxon>
        <taxon>Actinomycetota</taxon>
        <taxon>Actinomycetes</taxon>
        <taxon>Propionibacteriales</taxon>
        <taxon>Propionibacteriaceae</taxon>
        <taxon>Cutibacterium</taxon>
    </lineage>
</organism>
<proteinExistence type="inferred from homology"/>
<reference key="1">
    <citation type="journal article" date="2004" name="Science">
        <title>The complete genome sequence of Propionibacterium acnes, a commensal of human skin.</title>
        <authorList>
            <person name="Brueggemann H."/>
            <person name="Henne A."/>
            <person name="Hoster F."/>
            <person name="Liesegang H."/>
            <person name="Wiezer A."/>
            <person name="Strittmatter A."/>
            <person name="Hujer S."/>
            <person name="Duerre P."/>
            <person name="Gottschalk G."/>
        </authorList>
    </citation>
    <scope>NUCLEOTIDE SEQUENCE [LARGE SCALE GENOMIC DNA]</scope>
    <source>
        <strain>DSM 16379 / KPA171202</strain>
    </source>
</reference>
<keyword id="KW-0028">Amino-acid biosynthesis</keyword>
<keyword id="KW-0100">Branched-chain amino acid biosynthesis</keyword>
<keyword id="KW-0460">Magnesium</keyword>
<keyword id="KW-0479">Metal-binding</keyword>
<keyword id="KW-0521">NADP</keyword>
<keyword id="KW-0560">Oxidoreductase</keyword>
<feature type="chain" id="PRO_0000226189" description="Ketol-acid reductoisomerase (NADP(+))">
    <location>
        <begin position="1"/>
        <end position="342"/>
    </location>
</feature>
<feature type="domain" description="KARI N-terminal Rossmann" evidence="2">
    <location>
        <begin position="2"/>
        <end position="182"/>
    </location>
</feature>
<feature type="domain" description="KARI C-terminal knotted" evidence="3">
    <location>
        <begin position="183"/>
        <end position="328"/>
    </location>
</feature>
<feature type="active site" evidence="1">
    <location>
        <position position="108"/>
    </location>
</feature>
<feature type="binding site" evidence="1">
    <location>
        <begin position="25"/>
        <end position="28"/>
    </location>
    <ligand>
        <name>NADP(+)</name>
        <dbReference type="ChEBI" id="CHEBI:58349"/>
    </ligand>
</feature>
<feature type="binding site" evidence="1">
    <location>
        <position position="48"/>
    </location>
    <ligand>
        <name>NADP(+)</name>
        <dbReference type="ChEBI" id="CHEBI:58349"/>
    </ligand>
</feature>
<feature type="binding site" evidence="1">
    <location>
        <position position="51"/>
    </location>
    <ligand>
        <name>NADP(+)</name>
        <dbReference type="ChEBI" id="CHEBI:58349"/>
    </ligand>
</feature>
<feature type="binding site" evidence="1">
    <location>
        <position position="53"/>
    </location>
    <ligand>
        <name>NADP(+)</name>
        <dbReference type="ChEBI" id="CHEBI:58349"/>
    </ligand>
</feature>
<feature type="binding site" evidence="1">
    <location>
        <begin position="83"/>
        <end position="86"/>
    </location>
    <ligand>
        <name>NADP(+)</name>
        <dbReference type="ChEBI" id="CHEBI:58349"/>
    </ligand>
</feature>
<feature type="binding site" evidence="1">
    <location>
        <position position="134"/>
    </location>
    <ligand>
        <name>NADP(+)</name>
        <dbReference type="ChEBI" id="CHEBI:58349"/>
    </ligand>
</feature>
<feature type="binding site" evidence="1">
    <location>
        <position position="191"/>
    </location>
    <ligand>
        <name>Mg(2+)</name>
        <dbReference type="ChEBI" id="CHEBI:18420"/>
        <label>1</label>
    </ligand>
</feature>
<feature type="binding site" evidence="1">
    <location>
        <position position="191"/>
    </location>
    <ligand>
        <name>Mg(2+)</name>
        <dbReference type="ChEBI" id="CHEBI:18420"/>
        <label>2</label>
    </ligand>
</feature>
<feature type="binding site" evidence="1">
    <location>
        <position position="195"/>
    </location>
    <ligand>
        <name>Mg(2+)</name>
        <dbReference type="ChEBI" id="CHEBI:18420"/>
        <label>1</label>
    </ligand>
</feature>
<feature type="binding site" evidence="1">
    <location>
        <position position="227"/>
    </location>
    <ligand>
        <name>Mg(2+)</name>
        <dbReference type="ChEBI" id="CHEBI:18420"/>
        <label>2</label>
    </ligand>
</feature>
<feature type="binding site" evidence="1">
    <location>
        <position position="231"/>
    </location>
    <ligand>
        <name>Mg(2+)</name>
        <dbReference type="ChEBI" id="CHEBI:18420"/>
        <label>2</label>
    </ligand>
</feature>
<feature type="binding site" evidence="1">
    <location>
        <position position="252"/>
    </location>
    <ligand>
        <name>substrate</name>
    </ligand>
</feature>
<name>ILVC_CUTAK</name>
<sequence>MAKIYYDDDADLSIIQNRQVAVIGYGSQGHAHALNLRDSGVDVRVGLRDGSSSIAKAEAQGLRVLSIEDACEEADLIMVLVPDQNQRQLYAEHIAPHLKDGDALFFAHGFNVHFGYIKAPQGVDVCMVAPKGPGHIVRREYSDGRGVPVLVCVEQDASGIAWDLTRSYAKALGGLRAGGIETSFREETETDLFGEQAVLCGGLSHLIQAGFETLVTAGYQPEMAYFEVCHEMKMIVDLIIEGGISKLRWSISDTAEYGDYVSGPRVIDDHVKKNMKAVLDDIQNGAFAKRFIADQDAGAPQSKKFREGEAKHPIEATGKELRKMYSWLAAADDDYTEGSVAR</sequence>
<dbReference type="EC" id="1.1.1.86" evidence="1"/>
<dbReference type="EMBL" id="AE017283">
    <property type="protein sequence ID" value="AAT83123.1"/>
    <property type="molecule type" value="Genomic_DNA"/>
</dbReference>
<dbReference type="RefSeq" id="WP_002516503.1">
    <property type="nucleotide sequence ID" value="NZ_CP025935.1"/>
</dbReference>
<dbReference type="SMR" id="Q6A7Z2"/>
<dbReference type="EnsemblBacteria" id="AAT83123">
    <property type="protein sequence ID" value="AAT83123"/>
    <property type="gene ID" value="PPA1372"/>
</dbReference>
<dbReference type="GeneID" id="92857349"/>
<dbReference type="KEGG" id="pac:PPA1372"/>
<dbReference type="eggNOG" id="COG0059">
    <property type="taxonomic scope" value="Bacteria"/>
</dbReference>
<dbReference type="HOGENOM" id="CLU_033821_0_1_11"/>
<dbReference type="UniPathway" id="UPA00047">
    <property type="reaction ID" value="UER00056"/>
</dbReference>
<dbReference type="UniPathway" id="UPA00049">
    <property type="reaction ID" value="UER00060"/>
</dbReference>
<dbReference type="Proteomes" id="UP000000603">
    <property type="component" value="Chromosome"/>
</dbReference>
<dbReference type="GO" id="GO:0005829">
    <property type="term" value="C:cytosol"/>
    <property type="evidence" value="ECO:0007669"/>
    <property type="project" value="TreeGrafter"/>
</dbReference>
<dbReference type="GO" id="GO:0004455">
    <property type="term" value="F:ketol-acid reductoisomerase activity"/>
    <property type="evidence" value="ECO:0007669"/>
    <property type="project" value="UniProtKB-UniRule"/>
</dbReference>
<dbReference type="GO" id="GO:0000287">
    <property type="term" value="F:magnesium ion binding"/>
    <property type="evidence" value="ECO:0007669"/>
    <property type="project" value="UniProtKB-UniRule"/>
</dbReference>
<dbReference type="GO" id="GO:0050661">
    <property type="term" value="F:NADP binding"/>
    <property type="evidence" value="ECO:0007669"/>
    <property type="project" value="InterPro"/>
</dbReference>
<dbReference type="GO" id="GO:0009097">
    <property type="term" value="P:isoleucine biosynthetic process"/>
    <property type="evidence" value="ECO:0007669"/>
    <property type="project" value="UniProtKB-UniRule"/>
</dbReference>
<dbReference type="GO" id="GO:0009099">
    <property type="term" value="P:L-valine biosynthetic process"/>
    <property type="evidence" value="ECO:0007669"/>
    <property type="project" value="UniProtKB-UniRule"/>
</dbReference>
<dbReference type="FunFam" id="3.40.50.720:FF:000023">
    <property type="entry name" value="Ketol-acid reductoisomerase (NADP(+))"/>
    <property type="match status" value="1"/>
</dbReference>
<dbReference type="Gene3D" id="6.10.240.10">
    <property type="match status" value="1"/>
</dbReference>
<dbReference type="Gene3D" id="3.40.50.720">
    <property type="entry name" value="NAD(P)-binding Rossmann-like Domain"/>
    <property type="match status" value="1"/>
</dbReference>
<dbReference type="HAMAP" id="MF_00435">
    <property type="entry name" value="IlvC"/>
    <property type="match status" value="1"/>
</dbReference>
<dbReference type="InterPro" id="IPR008927">
    <property type="entry name" value="6-PGluconate_DH-like_C_sf"/>
</dbReference>
<dbReference type="InterPro" id="IPR013023">
    <property type="entry name" value="KARI"/>
</dbReference>
<dbReference type="InterPro" id="IPR000506">
    <property type="entry name" value="KARI_C"/>
</dbReference>
<dbReference type="InterPro" id="IPR013116">
    <property type="entry name" value="KARI_N"/>
</dbReference>
<dbReference type="InterPro" id="IPR014359">
    <property type="entry name" value="KARI_prok"/>
</dbReference>
<dbReference type="InterPro" id="IPR036291">
    <property type="entry name" value="NAD(P)-bd_dom_sf"/>
</dbReference>
<dbReference type="NCBIfam" id="TIGR00465">
    <property type="entry name" value="ilvC"/>
    <property type="match status" value="1"/>
</dbReference>
<dbReference type="NCBIfam" id="NF004017">
    <property type="entry name" value="PRK05479.1"/>
    <property type="match status" value="1"/>
</dbReference>
<dbReference type="NCBIfam" id="NF009940">
    <property type="entry name" value="PRK13403.1"/>
    <property type="match status" value="1"/>
</dbReference>
<dbReference type="PANTHER" id="PTHR21371">
    <property type="entry name" value="KETOL-ACID REDUCTOISOMERASE, MITOCHONDRIAL"/>
    <property type="match status" value="1"/>
</dbReference>
<dbReference type="PANTHER" id="PTHR21371:SF1">
    <property type="entry name" value="KETOL-ACID REDUCTOISOMERASE, MITOCHONDRIAL"/>
    <property type="match status" value="1"/>
</dbReference>
<dbReference type="Pfam" id="PF01450">
    <property type="entry name" value="KARI_C"/>
    <property type="match status" value="1"/>
</dbReference>
<dbReference type="Pfam" id="PF07991">
    <property type="entry name" value="KARI_N"/>
    <property type="match status" value="1"/>
</dbReference>
<dbReference type="PIRSF" id="PIRSF000116">
    <property type="entry name" value="IlvC_gammaproteo"/>
    <property type="match status" value="1"/>
</dbReference>
<dbReference type="SUPFAM" id="SSF48179">
    <property type="entry name" value="6-phosphogluconate dehydrogenase C-terminal domain-like"/>
    <property type="match status" value="1"/>
</dbReference>
<dbReference type="SUPFAM" id="SSF51735">
    <property type="entry name" value="NAD(P)-binding Rossmann-fold domains"/>
    <property type="match status" value="1"/>
</dbReference>
<dbReference type="PROSITE" id="PS51851">
    <property type="entry name" value="KARI_C"/>
    <property type="match status" value="1"/>
</dbReference>
<dbReference type="PROSITE" id="PS51850">
    <property type="entry name" value="KARI_N"/>
    <property type="match status" value="1"/>
</dbReference>
<gene>
    <name evidence="1" type="primary">ilvC</name>
    <name type="ordered locus">PPA1372</name>
</gene>
<comment type="function">
    <text evidence="1">Involved in the biosynthesis of branched-chain amino acids (BCAA). Catalyzes an alkyl-migration followed by a ketol-acid reduction of (S)-2-acetolactate (S2AL) to yield (R)-2,3-dihydroxy-isovalerate. In the isomerase reaction, S2AL is rearranged via a Mg-dependent methyl migration to produce 3-hydroxy-3-methyl-2-ketobutyrate (HMKB). In the reductase reaction, this 2-ketoacid undergoes a metal-dependent reduction by NADPH to yield (R)-2,3-dihydroxy-isovalerate.</text>
</comment>
<comment type="catalytic activity">
    <reaction evidence="1">
        <text>(2R)-2,3-dihydroxy-3-methylbutanoate + NADP(+) = (2S)-2-acetolactate + NADPH + H(+)</text>
        <dbReference type="Rhea" id="RHEA:22068"/>
        <dbReference type="ChEBI" id="CHEBI:15378"/>
        <dbReference type="ChEBI" id="CHEBI:49072"/>
        <dbReference type="ChEBI" id="CHEBI:57783"/>
        <dbReference type="ChEBI" id="CHEBI:58349"/>
        <dbReference type="ChEBI" id="CHEBI:58476"/>
        <dbReference type="EC" id="1.1.1.86"/>
    </reaction>
</comment>
<comment type="catalytic activity">
    <reaction evidence="1">
        <text>(2R,3R)-2,3-dihydroxy-3-methylpentanoate + NADP(+) = (S)-2-ethyl-2-hydroxy-3-oxobutanoate + NADPH + H(+)</text>
        <dbReference type="Rhea" id="RHEA:13493"/>
        <dbReference type="ChEBI" id="CHEBI:15378"/>
        <dbReference type="ChEBI" id="CHEBI:49256"/>
        <dbReference type="ChEBI" id="CHEBI:49258"/>
        <dbReference type="ChEBI" id="CHEBI:57783"/>
        <dbReference type="ChEBI" id="CHEBI:58349"/>
        <dbReference type="EC" id="1.1.1.86"/>
    </reaction>
</comment>
<comment type="cofactor">
    <cofactor evidence="1">
        <name>Mg(2+)</name>
        <dbReference type="ChEBI" id="CHEBI:18420"/>
    </cofactor>
    <text evidence="1">Binds 2 magnesium ions per subunit.</text>
</comment>
<comment type="pathway">
    <text evidence="1">Amino-acid biosynthesis; L-isoleucine biosynthesis; L-isoleucine from 2-oxobutanoate: step 2/4.</text>
</comment>
<comment type="pathway">
    <text evidence="1">Amino-acid biosynthesis; L-valine biosynthesis; L-valine from pyruvate: step 2/4.</text>
</comment>
<comment type="similarity">
    <text evidence="1">Belongs to the ketol-acid reductoisomerase family.</text>
</comment>
<protein>
    <recommendedName>
        <fullName evidence="1">Ketol-acid reductoisomerase (NADP(+))</fullName>
        <shortName evidence="1">KARI</shortName>
        <ecNumber evidence="1">1.1.1.86</ecNumber>
    </recommendedName>
    <alternativeName>
        <fullName evidence="1">Acetohydroxy-acid isomeroreductase</fullName>
        <shortName evidence="1">AHIR</shortName>
    </alternativeName>
    <alternativeName>
        <fullName evidence="1">Alpha-keto-beta-hydroxylacyl reductoisomerase</fullName>
    </alternativeName>
    <alternativeName>
        <fullName evidence="1">Ketol-acid reductoisomerase type 1</fullName>
    </alternativeName>
    <alternativeName>
        <fullName evidence="1">Ketol-acid reductoisomerase type I</fullName>
    </alternativeName>
</protein>